<protein>
    <recommendedName>
        <fullName>Putative uncharacterized protein YlbH</fullName>
    </recommendedName>
</protein>
<gene>
    <name type="primary">ylbH</name>
    <name type="ordered locus">b0499</name>
    <name type="ordered locus">JW0488</name>
</gene>
<keyword id="KW-1185">Reference proteome</keyword>
<comment type="similarity">
    <text evidence="1">Belongs to the RHS family.</text>
</comment>
<comment type="caution">
    <text evidence="1">Could be the product of a pseudogene.</text>
</comment>
<evidence type="ECO:0000305" key="1"/>
<proteinExistence type="uncertain"/>
<reference key="1">
    <citation type="submission" date="1997-01" db="EMBL/GenBank/DDBJ databases">
        <title>Sequence of minutes 4-25 of Escherichia coli.</title>
        <authorList>
            <person name="Chung E."/>
            <person name="Allen E."/>
            <person name="Araujo R."/>
            <person name="Aparicio A.M."/>
            <person name="Davis K."/>
            <person name="Duncan M."/>
            <person name="Federspiel N."/>
            <person name="Hyman R."/>
            <person name="Kalman S."/>
            <person name="Komp C."/>
            <person name="Kurdi O."/>
            <person name="Lew H."/>
            <person name="Lin D."/>
            <person name="Namath A."/>
            <person name="Oefner P."/>
            <person name="Roberts D."/>
            <person name="Schramm S."/>
            <person name="Davis R.W."/>
        </authorList>
    </citation>
    <scope>NUCLEOTIDE SEQUENCE [LARGE SCALE GENOMIC DNA]</scope>
    <source>
        <strain>K12 / MG1655 / ATCC 47076</strain>
    </source>
</reference>
<reference key="2">
    <citation type="journal article" date="1997" name="Science">
        <title>The complete genome sequence of Escherichia coli K-12.</title>
        <authorList>
            <person name="Blattner F.R."/>
            <person name="Plunkett G. III"/>
            <person name="Bloch C.A."/>
            <person name="Perna N.T."/>
            <person name="Burland V."/>
            <person name="Riley M."/>
            <person name="Collado-Vides J."/>
            <person name="Glasner J.D."/>
            <person name="Rode C.K."/>
            <person name="Mayhew G.F."/>
            <person name="Gregor J."/>
            <person name="Davis N.W."/>
            <person name="Kirkpatrick H.A."/>
            <person name="Goeden M.A."/>
            <person name="Rose D.J."/>
            <person name="Mau B."/>
            <person name="Shao Y."/>
        </authorList>
    </citation>
    <scope>NUCLEOTIDE SEQUENCE [LARGE SCALE GENOMIC DNA]</scope>
    <source>
        <strain>K12 / MG1655 / ATCC 47076</strain>
    </source>
</reference>
<reference key="3">
    <citation type="journal article" date="2006" name="Mol. Syst. Biol.">
        <title>Highly accurate genome sequences of Escherichia coli K-12 strains MG1655 and W3110.</title>
        <authorList>
            <person name="Hayashi K."/>
            <person name="Morooka N."/>
            <person name="Yamamoto Y."/>
            <person name="Fujita K."/>
            <person name="Isono K."/>
            <person name="Choi S."/>
            <person name="Ohtsubo E."/>
            <person name="Baba T."/>
            <person name="Wanner B.L."/>
            <person name="Mori H."/>
            <person name="Horiuchi T."/>
        </authorList>
    </citation>
    <scope>NUCLEOTIDE SEQUENCE [LARGE SCALE GENOMIC DNA]</scope>
    <source>
        <strain>K12 / W3110 / ATCC 27325 / DSM 5911</strain>
    </source>
</reference>
<name>YLBH_ECOLI</name>
<accession>P77759</accession>
<accession>Q2MBS8</accession>
<accession>Q79BD0</accession>
<sequence>MLALMDADGNIAWSGEYDEWGNQLNEENPHHLHQPYRLPGQQYDKESGLYYNRNRYYDPLQGRYITQDPIGLEGGWSLYAYPLNPVNGIDPLGLSPADVALIRRKDQLNHQRAWDILSDTYEDMKRLNLGGTDQFFHCMAFCRVSKLNDAGVSRSAKGLGYEKEIRDYGLNLFGMYGRKVKLSHSEMIEDNKKDLAVNDHGLTCPSTTDCSDRCSDYINPEHKKTIKALQDAGYLK</sequence>
<organism>
    <name type="scientific">Escherichia coli (strain K12)</name>
    <dbReference type="NCBI Taxonomy" id="83333"/>
    <lineage>
        <taxon>Bacteria</taxon>
        <taxon>Pseudomonadati</taxon>
        <taxon>Pseudomonadota</taxon>
        <taxon>Gammaproteobacteria</taxon>
        <taxon>Enterobacterales</taxon>
        <taxon>Enterobacteriaceae</taxon>
        <taxon>Escherichia</taxon>
    </lineage>
</organism>
<feature type="chain" id="PRO_0000252282" description="Putative uncharacterized protein YlbH">
    <location>
        <begin position="1"/>
        <end position="236"/>
    </location>
</feature>
<dbReference type="EMBL" id="U82664">
    <property type="protein sequence ID" value="AAB40253.1"/>
    <property type="molecule type" value="Genomic_DNA"/>
</dbReference>
<dbReference type="EMBL" id="U00096">
    <property type="status" value="NOT_ANNOTATED_CDS"/>
    <property type="molecule type" value="Genomic_DNA"/>
</dbReference>
<dbReference type="EMBL" id="AP009048">
    <property type="protein sequence ID" value="BAE76278.1"/>
    <property type="molecule type" value="Genomic_DNA"/>
</dbReference>
<dbReference type="PIR" id="B64781">
    <property type="entry name" value="B64781"/>
</dbReference>
<dbReference type="SMR" id="P77759"/>
<dbReference type="BioGRID" id="4259867">
    <property type="interactions" value="190"/>
</dbReference>
<dbReference type="DIP" id="DIP-28078N"/>
<dbReference type="FunCoup" id="P77759">
    <property type="interactions" value="37"/>
</dbReference>
<dbReference type="IntAct" id="P77759">
    <property type="interactions" value="1"/>
</dbReference>
<dbReference type="KEGG" id="ecj:JW0488"/>
<dbReference type="KEGG" id="ecoc:C3026_02455"/>
<dbReference type="PATRIC" id="fig|83333.103.peg.1266"/>
<dbReference type="eggNOG" id="COG3209">
    <property type="taxonomic scope" value="Bacteria"/>
</dbReference>
<dbReference type="HOGENOM" id="CLU_001218_4_7_6"/>
<dbReference type="InParanoid" id="P77759"/>
<dbReference type="Proteomes" id="UP000000625">
    <property type="component" value="Chromosome"/>
</dbReference>
<dbReference type="Gene3D" id="2.180.10.10">
    <property type="entry name" value="RHS repeat-associated core"/>
    <property type="match status" value="1"/>
</dbReference>
<dbReference type="Gene3D" id="1.10.132.110">
    <property type="entry name" value="Serum amyloid A protein"/>
    <property type="match status" value="1"/>
</dbReference>
<dbReference type="InterPro" id="IPR001826">
    <property type="entry name" value="RHS"/>
</dbReference>
<dbReference type="InterPro" id="IPR022385">
    <property type="entry name" value="Rhs_assc_core"/>
</dbReference>
<dbReference type="InterPro" id="IPR050708">
    <property type="entry name" value="T6SS_VgrG/RHS"/>
</dbReference>
<dbReference type="NCBIfam" id="TIGR03696">
    <property type="entry name" value="Rhs_assc_core"/>
    <property type="match status" value="1"/>
</dbReference>
<dbReference type="PANTHER" id="PTHR32305">
    <property type="match status" value="1"/>
</dbReference>
<dbReference type="PANTHER" id="PTHR32305:SF15">
    <property type="entry name" value="PROTEIN RHSA-RELATED"/>
    <property type="match status" value="1"/>
</dbReference>
<dbReference type="Pfam" id="PF03527">
    <property type="entry name" value="RHS"/>
    <property type="match status" value="1"/>
</dbReference>
<dbReference type="PRINTS" id="PR00394">
    <property type="entry name" value="RHSPROTEIN"/>
</dbReference>